<protein>
    <recommendedName>
        <fullName>Valine--tRNA ligase, mitochondrial</fullName>
        <ecNumber evidence="9">6.1.1.9</ecNumber>
    </recommendedName>
    <alternativeName>
        <fullName>Valyl-tRNA synthetase</fullName>
        <shortName>ValRS</shortName>
    </alternativeName>
    <alternativeName>
        <fullName>Valyl-tRNA synthetase-like</fullName>
    </alternativeName>
</protein>
<sequence>MPHLPLASFRPPFWGLRHSRGLPRFHSVSTQSEPHGSPISRRNREAKQKRLREKQATLEAEIAGESKSPAESIKAWRPKELVLYEIPTKPGEKKDVSGPLPPAYSPRYVEAAWYPWWVREGFFKPEYQARLPQATGETFSMCIPPPNVTGSLHIGHALTVAIQDALVRWHRMRGDQVLWVPGSDHAGIATQAVVEKQLWKERGVRRHELSREAFLREVWQWKEAKGGEICEQLRALGASLDWDRECFTMDVGSSVAVTEAFVRLYKAGLLYRNHQLVNWSCALRSAISDIEVENRPLPGHTQLRLPGCPTPVSFGLLFSVAFPVDGEPDAEVVVGTTRPETLPGDVAVAVHPDDSRYTHLHGRQLRHPLMGQPLPLITDYAVQPHVGTGAVKVTPAHSPADAEMGARHGLSPLNVIAEDGTMTSLCGDWLQGLHRFVAREKIMSVLSEWGLFRGLQNHPMVLPICSRSGDVIEYLLKNQWFVRCQEMGARAAKAVESGALELSPSFHQKNWQHWFSHIGDWCVSRQLWWGHQIPAYLVVEDHAQGEEDCWVVGRSEAEAREVAAELTGRPGAELTLERDPDVLDTWFSSALFPFSALGWPQETPDLARFYPLSLLETGSDLLLFWVGRMVMLGTQLTGQLPFSKVLLHPMVRDRQGRKMSKSLGNVLDPRDIISGVEMQVLQEKLRSGNLDPAELAIVAAAQKKDFPHGIPECGTDALRFTLCSHGVQAGDLHLSVSEVQSCRHFCNKIWNALRFILNALGEKFVPQPAEELSPSSPMDAWILSRLALAAQECERGFLTRELSLVTHALHHFWLHNLCDVYLEAVKPVLWHSPRPLGPPQVLFSCADLGLRLLAPLMPFLAEELWQRLPPRPGCPPAPSISVAPYPSACSLEHWRQPELERRFSRVQEVVQVLRALRATYQLTKARPRVLLQSSEPGDQGLFEAFLEPLGTLGYCGAVGLLPPGAAAPSGWAQAPLSDTAQVYMELQGLVDPQIQLPLLAARRYKLQKQLDSLTARTPSEGEAGTQRQQKLSSLQLELSKLDKAASHLRQLMDEPPAPGSPEL</sequence>
<gene>
    <name type="primary">VARS2</name>
    <name type="synonym">KIAA1885</name>
    <name type="synonym">VARS2L</name>
    <name type="synonym">VARSL</name>
</gene>
<reference key="1">
    <citation type="journal article" date="2001" name="DNA Res.">
        <title>Prediction of the coding sequences of unidentified human genes. XXI. The complete sequences of 60 new cDNA clones from brain which code for large proteins.</title>
        <authorList>
            <person name="Nagase T."/>
            <person name="Kikuno R."/>
            <person name="Ohara O."/>
        </authorList>
    </citation>
    <scope>NUCLEOTIDE SEQUENCE [LARGE SCALE MRNA] (ISOFORM 1)</scope>
    <scope>VARIANT GLN-1049</scope>
    <source>
        <tissue>Brain</tissue>
    </source>
</reference>
<reference key="2">
    <citation type="journal article" date="2004" name="Nat. Genet.">
        <title>Complete sequencing and characterization of 21,243 full-length human cDNAs.</title>
        <authorList>
            <person name="Ota T."/>
            <person name="Suzuki Y."/>
            <person name="Nishikawa T."/>
            <person name="Otsuki T."/>
            <person name="Sugiyama T."/>
            <person name="Irie R."/>
            <person name="Wakamatsu A."/>
            <person name="Hayashi K."/>
            <person name="Sato H."/>
            <person name="Nagai K."/>
            <person name="Kimura K."/>
            <person name="Makita H."/>
            <person name="Sekine M."/>
            <person name="Obayashi M."/>
            <person name="Nishi T."/>
            <person name="Shibahara T."/>
            <person name="Tanaka T."/>
            <person name="Ishii S."/>
            <person name="Yamamoto J."/>
            <person name="Saito K."/>
            <person name="Kawai Y."/>
            <person name="Isono Y."/>
            <person name="Nakamura Y."/>
            <person name="Nagahari K."/>
            <person name="Murakami K."/>
            <person name="Yasuda T."/>
            <person name="Iwayanagi T."/>
            <person name="Wagatsuma M."/>
            <person name="Shiratori A."/>
            <person name="Sudo H."/>
            <person name="Hosoiri T."/>
            <person name="Kaku Y."/>
            <person name="Kodaira H."/>
            <person name="Kondo H."/>
            <person name="Sugawara M."/>
            <person name="Takahashi M."/>
            <person name="Kanda K."/>
            <person name="Yokoi T."/>
            <person name="Furuya T."/>
            <person name="Kikkawa E."/>
            <person name="Omura Y."/>
            <person name="Abe K."/>
            <person name="Kamihara K."/>
            <person name="Katsuta N."/>
            <person name="Sato K."/>
            <person name="Tanikawa M."/>
            <person name="Yamazaki M."/>
            <person name="Ninomiya K."/>
            <person name="Ishibashi T."/>
            <person name="Yamashita H."/>
            <person name="Murakawa K."/>
            <person name="Fujimori K."/>
            <person name="Tanai H."/>
            <person name="Kimata M."/>
            <person name="Watanabe M."/>
            <person name="Hiraoka S."/>
            <person name="Chiba Y."/>
            <person name="Ishida S."/>
            <person name="Ono Y."/>
            <person name="Takiguchi S."/>
            <person name="Watanabe S."/>
            <person name="Yosida M."/>
            <person name="Hotuta T."/>
            <person name="Kusano J."/>
            <person name="Kanehori K."/>
            <person name="Takahashi-Fujii A."/>
            <person name="Hara H."/>
            <person name="Tanase T.-O."/>
            <person name="Nomura Y."/>
            <person name="Togiya S."/>
            <person name="Komai F."/>
            <person name="Hara R."/>
            <person name="Takeuchi K."/>
            <person name="Arita M."/>
            <person name="Imose N."/>
            <person name="Musashino K."/>
            <person name="Yuuki H."/>
            <person name="Oshima A."/>
            <person name="Sasaki N."/>
            <person name="Aotsuka S."/>
            <person name="Yoshikawa Y."/>
            <person name="Matsunawa H."/>
            <person name="Ichihara T."/>
            <person name="Shiohata N."/>
            <person name="Sano S."/>
            <person name="Moriya S."/>
            <person name="Momiyama H."/>
            <person name="Satoh N."/>
            <person name="Takami S."/>
            <person name="Terashima Y."/>
            <person name="Suzuki O."/>
            <person name="Nakagawa S."/>
            <person name="Senoh A."/>
            <person name="Mizoguchi H."/>
            <person name="Goto Y."/>
            <person name="Shimizu F."/>
            <person name="Wakebe H."/>
            <person name="Hishigaki H."/>
            <person name="Watanabe T."/>
            <person name="Sugiyama A."/>
            <person name="Takemoto M."/>
            <person name="Kawakami B."/>
            <person name="Yamazaki M."/>
            <person name="Watanabe K."/>
            <person name="Kumagai A."/>
            <person name="Itakura S."/>
            <person name="Fukuzumi Y."/>
            <person name="Fujimori Y."/>
            <person name="Komiyama M."/>
            <person name="Tashiro H."/>
            <person name="Tanigami A."/>
            <person name="Fujiwara T."/>
            <person name="Ono T."/>
            <person name="Yamada K."/>
            <person name="Fujii Y."/>
            <person name="Ozaki K."/>
            <person name="Hirao M."/>
            <person name="Ohmori Y."/>
            <person name="Kawabata A."/>
            <person name="Hikiji T."/>
            <person name="Kobatake N."/>
            <person name="Inagaki H."/>
            <person name="Ikema Y."/>
            <person name="Okamoto S."/>
            <person name="Okitani R."/>
            <person name="Kawakami T."/>
            <person name="Noguchi S."/>
            <person name="Itoh T."/>
            <person name="Shigeta K."/>
            <person name="Senba T."/>
            <person name="Matsumura K."/>
            <person name="Nakajima Y."/>
            <person name="Mizuno T."/>
            <person name="Morinaga M."/>
            <person name="Sasaki M."/>
            <person name="Togashi T."/>
            <person name="Oyama M."/>
            <person name="Hata H."/>
            <person name="Watanabe M."/>
            <person name="Komatsu T."/>
            <person name="Mizushima-Sugano J."/>
            <person name="Satoh T."/>
            <person name="Shirai Y."/>
            <person name="Takahashi Y."/>
            <person name="Nakagawa K."/>
            <person name="Okumura K."/>
            <person name="Nagase T."/>
            <person name="Nomura N."/>
            <person name="Kikuchi H."/>
            <person name="Masuho Y."/>
            <person name="Yamashita R."/>
            <person name="Nakai K."/>
            <person name="Yada T."/>
            <person name="Nakamura Y."/>
            <person name="Ohara O."/>
            <person name="Isogai T."/>
            <person name="Sugano S."/>
        </authorList>
    </citation>
    <scope>NUCLEOTIDE SEQUENCE [LARGE SCALE MRNA] (ISOFORMS 2; 3 AND 4)</scope>
    <scope>NUCLEOTIDE SEQUENCE [LARGE SCALE MRNA] OF 416-1063 (ISOFORM 1)</scope>
    <scope>VARIANTS ARG-449; LEU-680; GLN-917 AND THR-965</scope>
    <source>
        <tissue>Cerebellum</tissue>
        <tissue>Thalamus</tissue>
        <tissue>Uterus</tissue>
    </source>
</reference>
<reference key="3">
    <citation type="submission" date="2005-03" db="EMBL/GenBank/DDBJ databases">
        <authorList>
            <person name="Totoki Y."/>
            <person name="Toyoda A."/>
            <person name="Takeda T."/>
            <person name="Sakaki Y."/>
            <person name="Tanaka A."/>
            <person name="Yokoyama S."/>
            <person name="Ohara O."/>
            <person name="Nagase T."/>
            <person name="Kikuno R.F."/>
        </authorList>
    </citation>
    <scope>NUCLEOTIDE SEQUENCE [LARGE SCALE MRNA] (ISOFORM 1)</scope>
    <scope>VARIANTS ARG-449; LEU-680 AND THR-965</scope>
    <source>
        <tissue>Brain</tissue>
    </source>
</reference>
<reference key="4">
    <citation type="journal article" date="2003" name="Nature">
        <title>The DNA sequence and analysis of human chromosome 6.</title>
        <authorList>
            <person name="Mungall A.J."/>
            <person name="Palmer S.A."/>
            <person name="Sims S.K."/>
            <person name="Edwards C.A."/>
            <person name="Ashurst J.L."/>
            <person name="Wilming L."/>
            <person name="Jones M.C."/>
            <person name="Horton R."/>
            <person name="Hunt S.E."/>
            <person name="Scott C.E."/>
            <person name="Gilbert J.G.R."/>
            <person name="Clamp M.E."/>
            <person name="Bethel G."/>
            <person name="Milne S."/>
            <person name="Ainscough R."/>
            <person name="Almeida J.P."/>
            <person name="Ambrose K.D."/>
            <person name="Andrews T.D."/>
            <person name="Ashwell R.I.S."/>
            <person name="Babbage A.K."/>
            <person name="Bagguley C.L."/>
            <person name="Bailey J."/>
            <person name="Banerjee R."/>
            <person name="Barker D.J."/>
            <person name="Barlow K.F."/>
            <person name="Bates K."/>
            <person name="Beare D.M."/>
            <person name="Beasley H."/>
            <person name="Beasley O."/>
            <person name="Bird C.P."/>
            <person name="Blakey S.E."/>
            <person name="Bray-Allen S."/>
            <person name="Brook J."/>
            <person name="Brown A.J."/>
            <person name="Brown J.Y."/>
            <person name="Burford D.C."/>
            <person name="Burrill W."/>
            <person name="Burton J."/>
            <person name="Carder C."/>
            <person name="Carter N.P."/>
            <person name="Chapman J.C."/>
            <person name="Clark S.Y."/>
            <person name="Clark G."/>
            <person name="Clee C.M."/>
            <person name="Clegg S."/>
            <person name="Cobley V."/>
            <person name="Collier R.E."/>
            <person name="Collins J.E."/>
            <person name="Colman L.K."/>
            <person name="Corby N.R."/>
            <person name="Coville G.J."/>
            <person name="Culley K.M."/>
            <person name="Dhami P."/>
            <person name="Davies J."/>
            <person name="Dunn M."/>
            <person name="Earthrowl M.E."/>
            <person name="Ellington A.E."/>
            <person name="Evans K.A."/>
            <person name="Faulkner L."/>
            <person name="Francis M.D."/>
            <person name="Frankish A."/>
            <person name="Frankland J."/>
            <person name="French L."/>
            <person name="Garner P."/>
            <person name="Garnett J."/>
            <person name="Ghori M.J."/>
            <person name="Gilby L.M."/>
            <person name="Gillson C.J."/>
            <person name="Glithero R.J."/>
            <person name="Grafham D.V."/>
            <person name="Grant M."/>
            <person name="Gribble S."/>
            <person name="Griffiths C."/>
            <person name="Griffiths M.N.D."/>
            <person name="Hall R."/>
            <person name="Halls K.S."/>
            <person name="Hammond S."/>
            <person name="Harley J.L."/>
            <person name="Hart E.A."/>
            <person name="Heath P.D."/>
            <person name="Heathcott R."/>
            <person name="Holmes S.J."/>
            <person name="Howden P.J."/>
            <person name="Howe K.L."/>
            <person name="Howell G.R."/>
            <person name="Huckle E."/>
            <person name="Humphray S.J."/>
            <person name="Humphries M.D."/>
            <person name="Hunt A.R."/>
            <person name="Johnson C.M."/>
            <person name="Joy A.A."/>
            <person name="Kay M."/>
            <person name="Keenan S.J."/>
            <person name="Kimberley A.M."/>
            <person name="King A."/>
            <person name="Laird G.K."/>
            <person name="Langford C."/>
            <person name="Lawlor S."/>
            <person name="Leongamornlert D.A."/>
            <person name="Leversha M."/>
            <person name="Lloyd C.R."/>
            <person name="Lloyd D.M."/>
            <person name="Loveland J.E."/>
            <person name="Lovell J."/>
            <person name="Martin S."/>
            <person name="Mashreghi-Mohammadi M."/>
            <person name="Maslen G.L."/>
            <person name="Matthews L."/>
            <person name="McCann O.T."/>
            <person name="McLaren S.J."/>
            <person name="McLay K."/>
            <person name="McMurray A."/>
            <person name="Moore M.J.F."/>
            <person name="Mullikin J.C."/>
            <person name="Niblett D."/>
            <person name="Nickerson T."/>
            <person name="Novik K.L."/>
            <person name="Oliver K."/>
            <person name="Overton-Larty E.K."/>
            <person name="Parker A."/>
            <person name="Patel R."/>
            <person name="Pearce A.V."/>
            <person name="Peck A.I."/>
            <person name="Phillimore B.J.C.T."/>
            <person name="Phillips S."/>
            <person name="Plumb R.W."/>
            <person name="Porter K.M."/>
            <person name="Ramsey Y."/>
            <person name="Ranby S.A."/>
            <person name="Rice C.M."/>
            <person name="Ross M.T."/>
            <person name="Searle S.M."/>
            <person name="Sehra H.K."/>
            <person name="Sheridan E."/>
            <person name="Skuce C.D."/>
            <person name="Smith S."/>
            <person name="Smith M."/>
            <person name="Spraggon L."/>
            <person name="Squares S.L."/>
            <person name="Steward C.A."/>
            <person name="Sycamore N."/>
            <person name="Tamlyn-Hall G."/>
            <person name="Tester J."/>
            <person name="Theaker A.J."/>
            <person name="Thomas D.W."/>
            <person name="Thorpe A."/>
            <person name="Tracey A."/>
            <person name="Tromans A."/>
            <person name="Tubby B."/>
            <person name="Wall M."/>
            <person name="Wallis J.M."/>
            <person name="West A.P."/>
            <person name="White S.S."/>
            <person name="Whitehead S.L."/>
            <person name="Whittaker H."/>
            <person name="Wild A."/>
            <person name="Willey D.J."/>
            <person name="Wilmer T.E."/>
            <person name="Wood J.M."/>
            <person name="Wray P.W."/>
            <person name="Wyatt J.C."/>
            <person name="Young L."/>
            <person name="Younger R.M."/>
            <person name="Bentley D.R."/>
            <person name="Coulson A."/>
            <person name="Durbin R.M."/>
            <person name="Hubbard T."/>
            <person name="Sulston J.E."/>
            <person name="Dunham I."/>
            <person name="Rogers J."/>
            <person name="Beck S."/>
        </authorList>
    </citation>
    <scope>NUCLEOTIDE SEQUENCE [LARGE SCALE GENOMIC DNA]</scope>
    <scope>VARIANTS ARG-449; LEU-680; GLN-917; THR-965 AND GLN-1049</scope>
</reference>
<reference key="5">
    <citation type="journal article" date="2004" name="Genome Res.">
        <title>The status, quality, and expansion of the NIH full-length cDNA project: the Mammalian Gene Collection (MGC).</title>
        <authorList>
            <consortium name="The MGC Project Team"/>
        </authorList>
    </citation>
    <scope>NUCLEOTIDE SEQUENCE [LARGE SCALE MRNA] (ISOFORM 1)</scope>
    <scope>VARIANTS ARG-449; LEU-680; GLN-917; THR-965 AND GLN-1049</scope>
    <source>
        <tissue>Brain</tissue>
        <tissue>Eye</tissue>
        <tissue>Skin</tissue>
    </source>
</reference>
<reference key="6">
    <citation type="journal article" date="2007" name="BMC Genomics">
        <title>The full-ORF clone resource of the German cDNA consortium.</title>
        <authorList>
            <person name="Bechtel S."/>
            <person name="Rosenfelder H."/>
            <person name="Duda A."/>
            <person name="Schmidt C.P."/>
            <person name="Ernst U."/>
            <person name="Wellenreuther R."/>
            <person name="Mehrle A."/>
            <person name="Schuster C."/>
            <person name="Bahr A."/>
            <person name="Bloecker H."/>
            <person name="Heubner D."/>
            <person name="Hoerlein A."/>
            <person name="Michel G."/>
            <person name="Wedler H."/>
            <person name="Koehrer K."/>
            <person name="Ottenwaelder B."/>
            <person name="Poustka A."/>
            <person name="Wiemann S."/>
            <person name="Schupp I."/>
        </authorList>
    </citation>
    <scope>NUCLEOTIDE SEQUENCE [LARGE SCALE MRNA] OF 748-1063 (ISOFORM 1)</scope>
    <scope>VARIANT THR-965</scope>
    <source>
        <tissue>Testis</tissue>
    </source>
</reference>
<reference key="7">
    <citation type="journal article" date="2011" name="BMC Syst. Biol.">
        <title>Initial characterization of the human central proteome.</title>
        <authorList>
            <person name="Burkard T.R."/>
            <person name="Planyavsky M."/>
            <person name="Kaupe I."/>
            <person name="Breitwieser F.P."/>
            <person name="Buerckstuemmer T."/>
            <person name="Bennett K.L."/>
            <person name="Superti-Furga G."/>
            <person name="Colinge J."/>
        </authorList>
    </citation>
    <scope>IDENTIFICATION BY MASS SPECTROMETRY [LARGE SCALE ANALYSIS]</scope>
</reference>
<reference key="8">
    <citation type="journal article" date="2014" name="Hum. Mutat.">
        <title>VARS2 and TARS2 mutations in patients with mitochondrial encephalomyopathies.</title>
        <authorList>
            <person name="Diodato D."/>
            <person name="Melchionda L."/>
            <person name="Haack T.B."/>
            <person name="Dallabona C."/>
            <person name="Baruffini E."/>
            <person name="Donnini C."/>
            <person name="Granata T."/>
            <person name="Ragona F."/>
            <person name="Balestri P."/>
            <person name="Margollicci M."/>
            <person name="Lamantea E."/>
            <person name="Nasca A."/>
            <person name="Powell C.A."/>
            <person name="Minczuk M."/>
            <person name="Strom T.M."/>
            <person name="Meitinger T."/>
            <person name="Prokisch H."/>
            <person name="Lamperti C."/>
            <person name="Zeviani M."/>
            <person name="Ghezzi D."/>
        </authorList>
    </citation>
    <scope>INVOLVEMENT IN COXPD20</scope>
    <scope>VARIANT COXPD20 ILE-337</scope>
    <scope>CHARACTERIZATION OF VARIANT COXPD20 ILE-337</scope>
    <scope>FUNCTION</scope>
    <scope>CATALYTIC ACTIVITY</scope>
</reference>
<reference key="9">
    <citation type="journal article" date="2015" name="Proteomics">
        <title>N-terminome analysis of the human mitochondrial proteome.</title>
        <authorList>
            <person name="Vaca Jacome A.S."/>
            <person name="Rabilloud T."/>
            <person name="Schaeffer-Reiss C."/>
            <person name="Rompais M."/>
            <person name="Ayoub D."/>
            <person name="Lane L."/>
            <person name="Bairoch A."/>
            <person name="Van Dorsselaer A."/>
            <person name="Carapito C."/>
        </authorList>
    </citation>
    <scope>IDENTIFICATION BY MASS SPECTROMETRY [LARGE SCALE ANALYSIS]</scope>
</reference>
<reference key="10">
    <citation type="journal article" date="2014" name="JAMA">
        <title>Use of whole-exome sequencing to determine the genetic basis of multiple mitochondrial respiratory chain complex deficiencies.</title>
        <authorList>
            <person name="Taylor R.W."/>
            <person name="Pyle A."/>
            <person name="Griffin H."/>
            <person name="Blakely E.L."/>
            <person name="Duff J."/>
            <person name="He L."/>
            <person name="Smertenko T."/>
            <person name="Alston C.L."/>
            <person name="Neeve V.C."/>
            <person name="Best A."/>
            <person name="Yarham J.W."/>
            <person name="Kirschner J."/>
            <person name="Schara U."/>
            <person name="Talim B."/>
            <person name="Topaloglu H."/>
            <person name="Baric I."/>
            <person name="Holinski-Feder E."/>
            <person name="Abicht A."/>
            <person name="Czermin B."/>
            <person name="Kleinle S."/>
            <person name="Morris A.A."/>
            <person name="Vassallo G."/>
            <person name="Gorman G.S."/>
            <person name="Ramesh V."/>
            <person name="Turnbull D.M."/>
            <person name="Santibanez-Koref M."/>
            <person name="McFarland R."/>
            <person name="Horvath R."/>
            <person name="Chinnery P.F."/>
        </authorList>
    </citation>
    <scope>VARIANTS COXPD20 THR-349 AND ASP-596</scope>
</reference>
<organism>
    <name type="scientific">Homo sapiens</name>
    <name type="common">Human</name>
    <dbReference type="NCBI Taxonomy" id="9606"/>
    <lineage>
        <taxon>Eukaryota</taxon>
        <taxon>Metazoa</taxon>
        <taxon>Chordata</taxon>
        <taxon>Craniata</taxon>
        <taxon>Vertebrata</taxon>
        <taxon>Euteleostomi</taxon>
        <taxon>Mammalia</taxon>
        <taxon>Eutheria</taxon>
        <taxon>Euarchontoglires</taxon>
        <taxon>Primates</taxon>
        <taxon>Haplorrhini</taxon>
        <taxon>Catarrhini</taxon>
        <taxon>Hominidae</taxon>
        <taxon>Homo</taxon>
    </lineage>
</organism>
<keyword id="KW-0025">Alternative splicing</keyword>
<keyword id="KW-0030">Aminoacyl-tRNA synthetase</keyword>
<keyword id="KW-0067">ATP-binding</keyword>
<keyword id="KW-0225">Disease variant</keyword>
<keyword id="KW-0436">Ligase</keyword>
<keyword id="KW-0496">Mitochondrion</keyword>
<keyword id="KW-0547">Nucleotide-binding</keyword>
<keyword id="KW-1274">Primary mitochondrial disease</keyword>
<keyword id="KW-0648">Protein biosynthesis</keyword>
<keyword id="KW-1267">Proteomics identification</keyword>
<keyword id="KW-1185">Reference proteome</keyword>
<keyword id="KW-0809">Transit peptide</keyword>
<evidence type="ECO:0000250" key="1"/>
<evidence type="ECO:0000255" key="2"/>
<evidence type="ECO:0000256" key="3">
    <source>
        <dbReference type="SAM" id="MobiDB-lite"/>
    </source>
</evidence>
<evidence type="ECO:0000269" key="4">
    <source>
    </source>
</evidence>
<evidence type="ECO:0000269" key="5">
    <source>
    </source>
</evidence>
<evidence type="ECO:0000269" key="6">
    <source>
    </source>
</evidence>
<evidence type="ECO:0000269" key="7">
    <source>
    </source>
</evidence>
<evidence type="ECO:0000269" key="8">
    <source>
    </source>
</evidence>
<evidence type="ECO:0000269" key="9">
    <source>
    </source>
</evidence>
<evidence type="ECO:0000269" key="10">
    <source>
    </source>
</evidence>
<evidence type="ECO:0000269" key="11">
    <source ref="3"/>
</evidence>
<evidence type="ECO:0000303" key="12">
    <source>
    </source>
</evidence>
<evidence type="ECO:0000305" key="13"/>
<name>SYVM_HUMAN</name>
<accession>Q5ST30</accession>
<accession>A2ABL7</accession>
<accession>B4DET4</accession>
<accession>B4E3P5</accession>
<accession>F5GXJ0</accession>
<accession>F5H323</accession>
<accession>Q2M2A0</accession>
<accession>Q59FI1</accession>
<accession>Q5SQ96</accession>
<accession>Q5SS98</accession>
<accession>Q6DKJ5</accession>
<accession>Q6ZV24</accession>
<accession>Q96GN2</accession>
<accession>Q96H77</accession>
<accession>Q96Q02</accession>
<accession>Q9H6R2</accession>
<accession>Q9UFH7</accession>
<comment type="function">
    <text evidence="9">Catalyzes the attachment of valine to tRNA(Val) in a two-step reaction: valine is first activated by ATP to form Val-AMP and then transferred to the acceptor end of tRNA(Val).</text>
</comment>
<comment type="catalytic activity">
    <reaction evidence="9">
        <text>tRNA(Val) + L-valine + ATP = L-valyl-tRNA(Val) + AMP + diphosphate</text>
        <dbReference type="Rhea" id="RHEA:10704"/>
        <dbReference type="Rhea" id="RHEA-COMP:9672"/>
        <dbReference type="Rhea" id="RHEA-COMP:9708"/>
        <dbReference type="ChEBI" id="CHEBI:30616"/>
        <dbReference type="ChEBI" id="CHEBI:33019"/>
        <dbReference type="ChEBI" id="CHEBI:57762"/>
        <dbReference type="ChEBI" id="CHEBI:78442"/>
        <dbReference type="ChEBI" id="CHEBI:78537"/>
        <dbReference type="ChEBI" id="CHEBI:456215"/>
        <dbReference type="EC" id="6.1.1.9"/>
    </reaction>
</comment>
<comment type="interaction">
    <interactant intactId="EBI-2116622">
        <id>Q5ST30</id>
    </interactant>
    <interactant intactId="EBI-11743294">
        <id>Q8IZP0-5</id>
        <label>ABI1</label>
    </interactant>
    <organismsDiffer>false</organismsDiffer>
    <experiments>3</experiments>
</comment>
<comment type="interaction">
    <interactant intactId="EBI-2116622">
        <id>Q5ST30</id>
    </interactant>
    <interactant intactId="EBI-11096309">
        <id>Q9NYB9-2</id>
        <label>ABI2</label>
    </interactant>
    <organismsDiffer>false</organismsDiffer>
    <experiments>3</experiments>
</comment>
<comment type="interaction">
    <interactant intactId="EBI-2116622">
        <id>Q5ST30</id>
    </interactant>
    <interactant intactId="EBI-742038">
        <id>Q9P2A4</id>
        <label>ABI3</label>
    </interactant>
    <organismsDiffer>false</organismsDiffer>
    <experiments>3</experiments>
</comment>
<comment type="interaction">
    <interactant intactId="EBI-2116622">
        <id>Q5ST30</id>
    </interactant>
    <interactant intactId="EBI-713635">
        <id>O43639</id>
        <label>NCK2</label>
    </interactant>
    <organismsDiffer>false</organismsDiffer>
    <experiments>3</experiments>
</comment>
<comment type="interaction">
    <interactant intactId="EBI-2116622">
        <id>Q5ST30</id>
    </interactant>
    <interactant intactId="EBI-741237">
        <id>O60504</id>
        <label>SORBS3</label>
    </interactant>
    <organismsDiffer>false</organismsDiffer>
    <experiments>3</experiments>
</comment>
<comment type="interaction">
    <interactant intactId="EBI-10244969">
        <id>Q5ST30-3</id>
    </interactant>
    <interactant intactId="EBI-2548702">
        <id>Q96DZ9</id>
        <label>CMTM5</label>
    </interactant>
    <organismsDiffer>false</organismsDiffer>
    <experiments>3</experiments>
</comment>
<comment type="interaction">
    <interactant intactId="EBI-10244969">
        <id>Q5ST30-3</id>
    </interactant>
    <interactant intactId="EBI-944295">
        <id>Q969L2</id>
        <label>MAL2</label>
    </interactant>
    <organismsDiffer>false</organismsDiffer>
    <experiments>3</experiments>
</comment>
<comment type="interaction">
    <interactant intactId="EBI-10244997">
        <id>Q5ST30-4</id>
    </interactant>
    <interactant intactId="EBI-743598">
        <id>Q9NYB9</id>
        <label>ABI2</label>
    </interactant>
    <organismsDiffer>false</organismsDiffer>
    <experiments>3</experiments>
</comment>
<comment type="interaction">
    <interactant intactId="EBI-10244997">
        <id>Q5ST30-4</id>
    </interactant>
    <interactant intactId="EBI-713635">
        <id>O43639</id>
        <label>NCK2</label>
    </interactant>
    <organismsDiffer>false</organismsDiffer>
    <experiments>3</experiments>
</comment>
<comment type="interaction">
    <interactant intactId="EBI-10244997">
        <id>Q5ST30-4</id>
    </interactant>
    <interactant intactId="EBI-741237">
        <id>O60504</id>
        <label>SORBS3</label>
    </interactant>
    <organismsDiffer>false</organismsDiffer>
    <experiments>3</experiments>
</comment>
<comment type="subcellular location">
    <subcellularLocation>
        <location evidence="13">Mitochondrion</location>
    </subcellularLocation>
</comment>
<comment type="alternative products">
    <event type="alternative splicing"/>
    <isoform>
        <id>Q5ST30-1</id>
        <name>1</name>
        <sequence type="displayed"/>
    </isoform>
    <isoform>
        <id>Q5ST30-2</id>
        <name>2</name>
        <sequence type="described" ref="VSP_034032"/>
    </isoform>
    <isoform>
        <id>Q5ST30-3</id>
        <name>3</name>
        <sequence type="described" ref="VSP_045483"/>
    </isoform>
    <isoform>
        <id>Q5ST30-4</id>
        <name>4</name>
        <sequence type="described" ref="VSP_046102"/>
    </isoform>
</comment>
<comment type="disease" evidence="9 10">
    <disease id="DI-04181">
        <name>Combined oxidative phosphorylation deficiency 20</name>
        <acronym>COXPD20</acronym>
        <description>A disorder due to mitochondrial respiratory chain complex defects. Clinical features are variable and include muscle weakness with hypotonia, central neurological disease with progressive external ophthalmoplegia, ptosis and ataxia, delayed psychomotor development, cardiomyopathy, abnormal liver function, facial dysmorphism, microcephaly and epilepsy.</description>
        <dbReference type="MIM" id="615917"/>
    </disease>
    <text>The disease is caused by variants affecting the gene represented in this entry.</text>
</comment>
<comment type="similarity">
    <text evidence="13">Belongs to the class-I aminoacyl-tRNA synthetase family.</text>
</comment>
<comment type="sequence caution" evidence="13">
    <conflict type="erroneous initiation">
        <sequence resource="EMBL-CDS" id="BAB15191"/>
    </conflict>
    <text>Truncated N-terminus.</text>
</comment>
<comment type="sequence caution" evidence="13">
    <conflict type="erroneous initiation">
        <sequence resource="EMBL-CDS" id="BAB67778"/>
    </conflict>
    <text>Extended N-terminus.</text>
</comment>
<comment type="sequence caution" evidence="13">
    <conflict type="miscellaneous discrepancy">
        <sequence resource="EMBL-CDS" id="BAD92716"/>
    </conflict>
    <text>The sequence differs from that shown because it seems to be derived from a pre-mRNA.</text>
</comment>
<proteinExistence type="evidence at protein level"/>
<dbReference type="EC" id="6.1.1.9" evidence="9"/>
<dbReference type="EMBL" id="AB067472">
    <property type="protein sequence ID" value="BAB67778.1"/>
    <property type="status" value="ALT_INIT"/>
    <property type="molecule type" value="mRNA"/>
</dbReference>
<dbReference type="EMBL" id="AK025618">
    <property type="protein sequence ID" value="BAB15191.1"/>
    <property type="status" value="ALT_INIT"/>
    <property type="molecule type" value="mRNA"/>
</dbReference>
<dbReference type="EMBL" id="AK125069">
    <property type="status" value="NOT_ANNOTATED_CDS"/>
    <property type="molecule type" value="mRNA"/>
</dbReference>
<dbReference type="EMBL" id="AK293780">
    <property type="protein sequence ID" value="BAG57195.1"/>
    <property type="molecule type" value="mRNA"/>
</dbReference>
<dbReference type="EMBL" id="AK304807">
    <property type="protein sequence ID" value="BAG65557.1"/>
    <property type="molecule type" value="mRNA"/>
</dbReference>
<dbReference type="EMBL" id="AB209479">
    <property type="protein sequence ID" value="BAD92716.1"/>
    <property type="status" value="ALT_SEQ"/>
    <property type="molecule type" value="Transcribed_RNA"/>
</dbReference>
<dbReference type="EMBL" id="AL662854">
    <property type="status" value="NOT_ANNOTATED_CDS"/>
    <property type="molecule type" value="Genomic_DNA"/>
</dbReference>
<dbReference type="EMBL" id="AL669830">
    <property type="status" value="NOT_ANNOTATED_CDS"/>
    <property type="molecule type" value="Genomic_DNA"/>
</dbReference>
<dbReference type="EMBL" id="AL773541">
    <property type="status" value="NOT_ANNOTATED_CDS"/>
    <property type="molecule type" value="Genomic_DNA"/>
</dbReference>
<dbReference type="EMBL" id="BX927194">
    <property type="status" value="NOT_ANNOTATED_CDS"/>
    <property type="molecule type" value="Genomic_DNA"/>
</dbReference>
<dbReference type="EMBL" id="CR759747">
    <property type="status" value="NOT_ANNOTATED_CDS"/>
    <property type="molecule type" value="Genomic_DNA"/>
</dbReference>
<dbReference type="EMBL" id="CR936875">
    <property type="status" value="NOT_ANNOTATED_CDS"/>
    <property type="molecule type" value="Genomic_DNA"/>
</dbReference>
<dbReference type="EMBL" id="BC008844">
    <property type="protein sequence ID" value="AAH08844.2"/>
    <property type="molecule type" value="mRNA"/>
</dbReference>
<dbReference type="EMBL" id="BC009355">
    <property type="protein sequence ID" value="AAH09355.2"/>
    <property type="molecule type" value="mRNA"/>
</dbReference>
<dbReference type="EMBL" id="BC073838">
    <property type="protein sequence ID" value="AAH73838.1"/>
    <property type="molecule type" value="mRNA"/>
</dbReference>
<dbReference type="EMBL" id="BC112054">
    <property type="protein sequence ID" value="AAI12055.1"/>
    <property type="molecule type" value="mRNA"/>
</dbReference>
<dbReference type="EMBL" id="BC113605">
    <property type="protein sequence ID" value="AAI13606.1"/>
    <property type="molecule type" value="mRNA"/>
</dbReference>
<dbReference type="EMBL" id="AL122037">
    <property type="protein sequence ID" value="CAB59177.1"/>
    <property type="molecule type" value="mRNA"/>
</dbReference>
<dbReference type="CCDS" id="CCDS34387.1">
    <molecule id="Q5ST30-1"/>
</dbReference>
<dbReference type="CCDS" id="CCDS54981.1">
    <molecule id="Q5ST30-3"/>
</dbReference>
<dbReference type="RefSeq" id="NP_001161205.1">
    <molecule id="Q5ST30-3"/>
    <property type="nucleotide sequence ID" value="NM_001167733.3"/>
</dbReference>
<dbReference type="RefSeq" id="NP_001161206.1">
    <molecule id="Q5ST30-4"/>
    <property type="nucleotide sequence ID" value="NM_001167734.2"/>
</dbReference>
<dbReference type="RefSeq" id="NP_065175.4">
    <molecule id="Q5ST30-1"/>
    <property type="nucleotide sequence ID" value="NM_020442.5"/>
</dbReference>
<dbReference type="SMR" id="Q5ST30"/>
<dbReference type="BioGRID" id="121426">
    <property type="interactions" value="118"/>
</dbReference>
<dbReference type="FunCoup" id="Q5ST30">
    <property type="interactions" value="418"/>
</dbReference>
<dbReference type="IntAct" id="Q5ST30">
    <property type="interactions" value="33"/>
</dbReference>
<dbReference type="MINT" id="Q5ST30"/>
<dbReference type="STRING" id="9606.ENSP00000441000"/>
<dbReference type="GlyGen" id="Q5ST30">
    <property type="glycosylation" value="2 sites"/>
</dbReference>
<dbReference type="iPTMnet" id="Q5ST30"/>
<dbReference type="PhosphoSitePlus" id="Q5ST30"/>
<dbReference type="BioMuta" id="VARS2"/>
<dbReference type="DMDM" id="296452917"/>
<dbReference type="jPOST" id="Q5ST30"/>
<dbReference type="MassIVE" id="Q5ST30"/>
<dbReference type="PaxDb" id="9606-ENSP00000441000"/>
<dbReference type="PeptideAtlas" id="Q5ST30"/>
<dbReference type="ProteomicsDB" id="24437"/>
<dbReference type="ProteomicsDB" id="26145"/>
<dbReference type="ProteomicsDB" id="63892">
    <molecule id="Q5ST30-1"/>
</dbReference>
<dbReference type="ProteomicsDB" id="63893">
    <molecule id="Q5ST30-2"/>
</dbReference>
<dbReference type="Pumba" id="Q5ST30"/>
<dbReference type="Antibodypedia" id="45126">
    <property type="antibodies" value="56 antibodies from 17 providers"/>
</dbReference>
<dbReference type="DNASU" id="57176"/>
<dbReference type="Ensembl" id="ENST00000321897.9">
    <molecule id="Q5ST30-1"/>
    <property type="protein sequence ID" value="ENSP00000316092.5"/>
    <property type="gene ID" value="ENSG00000137411.19"/>
</dbReference>
<dbReference type="Ensembl" id="ENST00000415079.6">
    <molecule id="Q5ST30-1"/>
    <property type="protein sequence ID" value="ENSP00000400867.2"/>
    <property type="gene ID" value="ENSG00000223494.11"/>
</dbReference>
<dbReference type="Ensembl" id="ENST00000541562.6">
    <molecule id="Q5ST30-1"/>
    <property type="protein sequence ID" value="ENSP00000441000.2"/>
    <property type="gene ID" value="ENSG00000137411.19"/>
</dbReference>
<dbReference type="Ensembl" id="ENST00000546854.5">
    <molecule id="Q5ST30-4"/>
    <property type="protein sequence ID" value="ENSP00000446839.1"/>
    <property type="gene ID" value="ENSG00000223494.11"/>
</dbReference>
<dbReference type="Ensembl" id="ENST00000625423.2">
    <molecule id="Q5ST30-3"/>
    <property type="protein sequence ID" value="ENSP00000485818.1"/>
    <property type="gene ID" value="ENSG00000137411.19"/>
</dbReference>
<dbReference type="Ensembl" id="ENST00000676266.1">
    <molecule id="Q5ST30-1"/>
    <property type="protein sequence ID" value="ENSP00000502585.1"/>
    <property type="gene ID" value="ENSG00000137411.19"/>
</dbReference>
<dbReference type="GeneID" id="57176"/>
<dbReference type="KEGG" id="hsa:57176"/>
<dbReference type="MANE-Select" id="ENST00000676266.1">
    <property type="protein sequence ID" value="ENSP00000502585.1"/>
    <property type="RefSeq nucleotide sequence ID" value="NM_020442.6"/>
    <property type="RefSeq protein sequence ID" value="NP_065175.4"/>
</dbReference>
<dbReference type="UCSC" id="uc003nsc.3">
    <molecule id="Q5ST30-1"/>
    <property type="organism name" value="human"/>
</dbReference>
<dbReference type="AGR" id="HGNC:21642"/>
<dbReference type="CTD" id="57176"/>
<dbReference type="DisGeNET" id="57176"/>
<dbReference type="GeneCards" id="VARS2"/>
<dbReference type="HGNC" id="HGNC:21642">
    <property type="gene designation" value="VARS2"/>
</dbReference>
<dbReference type="HPA" id="ENSG00000137411">
    <property type="expression patterns" value="Low tissue specificity"/>
</dbReference>
<dbReference type="MalaCards" id="VARS2"/>
<dbReference type="MIM" id="612802">
    <property type="type" value="gene"/>
</dbReference>
<dbReference type="MIM" id="615917">
    <property type="type" value="phenotype"/>
</dbReference>
<dbReference type="neXtProt" id="NX_Q5ST30"/>
<dbReference type="OpenTargets" id="ENSG00000137411"/>
<dbReference type="Orphanet" id="420728">
    <property type="disease" value="Combined oxidative phosphorylation defect type 20"/>
</dbReference>
<dbReference type="PharmGKB" id="PA164742816"/>
<dbReference type="VEuPathDB" id="HostDB:ENSG00000137411"/>
<dbReference type="eggNOG" id="KOG0432">
    <property type="taxonomic scope" value="Eukaryota"/>
</dbReference>
<dbReference type="GeneTree" id="ENSGT00940000159890"/>
<dbReference type="InParanoid" id="Q5ST30"/>
<dbReference type="OMA" id="RQWYIRN"/>
<dbReference type="OrthoDB" id="629407at2759"/>
<dbReference type="PAN-GO" id="Q5ST30">
    <property type="GO annotations" value="3 GO annotations based on evolutionary models"/>
</dbReference>
<dbReference type="PhylomeDB" id="Q5ST30"/>
<dbReference type="TreeFam" id="TF354250"/>
<dbReference type="PathwayCommons" id="Q5ST30"/>
<dbReference type="Reactome" id="R-HSA-379726">
    <property type="pathway name" value="Mitochondrial tRNA aminoacylation"/>
</dbReference>
<dbReference type="SignaLink" id="Q5ST30"/>
<dbReference type="SIGNOR" id="Q5ST30"/>
<dbReference type="BioGRID-ORCS" id="57176">
    <property type="hits" value="438 hits in 1160 CRISPR screens"/>
</dbReference>
<dbReference type="ChiTaRS" id="VARS2">
    <property type="organism name" value="human"/>
</dbReference>
<dbReference type="GenomeRNAi" id="57176"/>
<dbReference type="Pharos" id="Q5ST30">
    <property type="development level" value="Tbio"/>
</dbReference>
<dbReference type="PRO" id="PR:Q5ST30"/>
<dbReference type="Proteomes" id="UP000005640">
    <property type="component" value="Chromosome 6"/>
</dbReference>
<dbReference type="RNAct" id="Q5ST30">
    <property type="molecule type" value="protein"/>
</dbReference>
<dbReference type="Bgee" id="ENSG00000137411">
    <property type="expression patterns" value="Expressed in right hemisphere of cerebellum and 96 other cell types or tissues"/>
</dbReference>
<dbReference type="ExpressionAtlas" id="Q5ST30">
    <property type="expression patterns" value="baseline and differential"/>
</dbReference>
<dbReference type="GO" id="GO:0005829">
    <property type="term" value="C:cytosol"/>
    <property type="evidence" value="ECO:0000318"/>
    <property type="project" value="GO_Central"/>
</dbReference>
<dbReference type="GO" id="GO:0005739">
    <property type="term" value="C:mitochondrion"/>
    <property type="evidence" value="ECO:0006056"/>
    <property type="project" value="FlyBase"/>
</dbReference>
<dbReference type="GO" id="GO:0002161">
    <property type="term" value="F:aminoacyl-tRNA deacylase activity"/>
    <property type="evidence" value="ECO:0007669"/>
    <property type="project" value="InterPro"/>
</dbReference>
<dbReference type="GO" id="GO:0005524">
    <property type="term" value="F:ATP binding"/>
    <property type="evidence" value="ECO:0007669"/>
    <property type="project" value="UniProtKB-KW"/>
</dbReference>
<dbReference type="GO" id="GO:0004832">
    <property type="term" value="F:valine-tRNA ligase activity"/>
    <property type="evidence" value="ECO:0000315"/>
    <property type="project" value="UniProtKB"/>
</dbReference>
<dbReference type="GO" id="GO:0006438">
    <property type="term" value="P:valyl-tRNA aminoacylation"/>
    <property type="evidence" value="ECO:0000318"/>
    <property type="project" value="GO_Central"/>
</dbReference>
<dbReference type="CDD" id="cd07962">
    <property type="entry name" value="Anticodon_Ia_Val"/>
    <property type="match status" value="1"/>
</dbReference>
<dbReference type="CDD" id="cd00817">
    <property type="entry name" value="ValRS_core"/>
    <property type="match status" value="1"/>
</dbReference>
<dbReference type="FunFam" id="1.10.730.10:FF:000019">
    <property type="entry name" value="Valine--tRNA ligase, mitochondrial"/>
    <property type="match status" value="1"/>
</dbReference>
<dbReference type="FunFam" id="3.40.50.620:FF:000020">
    <property type="entry name" value="Valine--tRNA ligase, mitochondrial"/>
    <property type="match status" value="1"/>
</dbReference>
<dbReference type="FunFam" id="3.40.50.620:FF:000120">
    <property type="entry name" value="Valine--tRNA ligase, mitochondrial"/>
    <property type="match status" value="1"/>
</dbReference>
<dbReference type="FunFam" id="3.90.740.10:FF:000007">
    <property type="entry name" value="Valine--tRNA ligase, mitochondrial"/>
    <property type="match status" value="1"/>
</dbReference>
<dbReference type="FunFam" id="3.90.740.10:FF:000014">
    <property type="entry name" value="valine--tRNA ligase, mitochondrial"/>
    <property type="match status" value="1"/>
</dbReference>
<dbReference type="Gene3D" id="3.40.50.620">
    <property type="entry name" value="HUPs"/>
    <property type="match status" value="2"/>
</dbReference>
<dbReference type="Gene3D" id="1.10.730.10">
    <property type="entry name" value="Isoleucyl-tRNA Synthetase, Domain 1"/>
    <property type="match status" value="1"/>
</dbReference>
<dbReference type="Gene3D" id="3.90.740.10">
    <property type="entry name" value="Valyl/Leucyl/Isoleucyl-tRNA synthetase, editing domain"/>
    <property type="match status" value="2"/>
</dbReference>
<dbReference type="InterPro" id="IPR001412">
    <property type="entry name" value="aa-tRNA-synth_I_CS"/>
</dbReference>
<dbReference type="InterPro" id="IPR002300">
    <property type="entry name" value="aa-tRNA-synth_Ia"/>
</dbReference>
<dbReference type="InterPro" id="IPR033705">
    <property type="entry name" value="Anticodon_Ia_Val"/>
</dbReference>
<dbReference type="InterPro" id="IPR013155">
    <property type="entry name" value="M/V/L/I-tRNA-synth_anticd-bd"/>
</dbReference>
<dbReference type="InterPro" id="IPR014729">
    <property type="entry name" value="Rossmann-like_a/b/a_fold"/>
</dbReference>
<dbReference type="InterPro" id="IPR009080">
    <property type="entry name" value="tRNAsynth_Ia_anticodon-bd"/>
</dbReference>
<dbReference type="InterPro" id="IPR009008">
    <property type="entry name" value="Val/Leu/Ile-tRNA-synth_edit"/>
</dbReference>
<dbReference type="InterPro" id="IPR002303">
    <property type="entry name" value="Valyl-tRNA_ligase"/>
</dbReference>
<dbReference type="NCBIfam" id="NF004349">
    <property type="entry name" value="PRK05729.1"/>
    <property type="match status" value="1"/>
</dbReference>
<dbReference type="NCBIfam" id="TIGR00422">
    <property type="entry name" value="valS"/>
    <property type="match status" value="1"/>
</dbReference>
<dbReference type="PANTHER" id="PTHR11946:SF71">
    <property type="entry name" value="VALINE--TRNA LIGASE, MITOCHONDRIAL"/>
    <property type="match status" value="1"/>
</dbReference>
<dbReference type="PANTHER" id="PTHR11946">
    <property type="entry name" value="VALYL-TRNA SYNTHETASES"/>
    <property type="match status" value="1"/>
</dbReference>
<dbReference type="Pfam" id="PF08264">
    <property type="entry name" value="Anticodon_1"/>
    <property type="match status" value="1"/>
</dbReference>
<dbReference type="Pfam" id="PF00133">
    <property type="entry name" value="tRNA-synt_1"/>
    <property type="match status" value="1"/>
</dbReference>
<dbReference type="PRINTS" id="PR00986">
    <property type="entry name" value="TRNASYNTHVAL"/>
</dbReference>
<dbReference type="SUPFAM" id="SSF47323">
    <property type="entry name" value="Anticodon-binding domain of a subclass of class I aminoacyl-tRNA synthetases"/>
    <property type="match status" value="1"/>
</dbReference>
<dbReference type="SUPFAM" id="SSF52374">
    <property type="entry name" value="Nucleotidylyl transferase"/>
    <property type="match status" value="1"/>
</dbReference>
<dbReference type="SUPFAM" id="SSF50677">
    <property type="entry name" value="ValRS/IleRS/LeuRS editing domain"/>
    <property type="match status" value="1"/>
</dbReference>
<dbReference type="PROSITE" id="PS00178">
    <property type="entry name" value="AA_TRNA_LIGASE_I"/>
    <property type="match status" value="1"/>
</dbReference>
<feature type="transit peptide" description="Mitochondrion" evidence="2">
    <location>
        <begin position="1"/>
        <end position="26"/>
    </location>
</feature>
<feature type="chain" id="PRO_0000338000" description="Valine--tRNA ligase, mitochondrial">
    <location>
        <begin position="27"/>
        <end position="1063"/>
    </location>
</feature>
<feature type="region of interest" description="Disordered" evidence="3">
    <location>
        <begin position="25"/>
        <end position="53"/>
    </location>
</feature>
<feature type="short sequence motif" description="'HIGH' region">
    <location>
        <begin position="146"/>
        <end position="156"/>
    </location>
</feature>
<feature type="short sequence motif" description="'KMSKS' region">
    <location>
        <begin position="658"/>
        <end position="662"/>
    </location>
</feature>
<feature type="compositionally biased region" description="Basic and acidic residues" evidence="3">
    <location>
        <begin position="42"/>
        <end position="53"/>
    </location>
</feature>
<feature type="binding site" evidence="1">
    <location>
        <position position="661"/>
    </location>
    <ligand>
        <name>ATP</name>
        <dbReference type="ChEBI" id="CHEBI:30616"/>
    </ligand>
</feature>
<feature type="splice variant" id="VSP_034032" description="In isoform 2." evidence="12">
    <original>MPHLPLASFRPPFWGLRHSRGLPRFHSVSTQSEPHGSPISRRNREAKQKRLREKQATLEAEIAGESKSPAESIKAWRPKELVLYEIPTKPGEKKDVSGPLPPAYSPRYVEAAWYPWWVREGFFKPEYQARLPQATGETFSMCIPPPNVTGSLHIGHALTVAIQDALVRWHRMRGDQVLWVPGSDHAGIATQAVVEKQLWKERGVRRHELSREAFLREVWQWKEAKGGEICEQLRALGASLDWDRECFTMDVGSSVAVTEAFVRLYKAGLLYRNHQLVNWSCALRSAISDIEVENRPLPGHTQLRLPGCPTPVSFGLLFSVAFPVDGEPDAEVVVGTTRPETLPGDVAVAVHPDDSRYTHLHGRQLRHPLMGQPLPLITDYAVQPHVGTGAVKVTPAHSPADAEMGARHGLSPLNVIAEDGTMTSLCGDWLQGLHRFVAREKIMSVLSEWGLFRGLQNHPMVLPICSRSGDVIEYLLKNQWFVRCQEMGARAAKAVESGALELSPSFHQKNWQHWFSHIGDWCVSRQLWWGHQIPAYLVVEDHAQGEEDCWVVGRSEAEAREVAAELTGRPGAELTLERDPDVLDTWFSSALFPFSALGWPQETPDLARFYPLSLLETGSDLLLFWVGRMVMLGTQLTGQLPFSK</original>
    <variation>MVFFCPVPLFCPGLAPRDPRPCSFLPPVTFGNGQRPSAVLGGPHGHVGDPAHRAAALQQVWRPEIPRHLQGNPPLLTPPCPQ</variation>
    <location>
        <begin position="1"/>
        <end position="644"/>
    </location>
</feature>
<feature type="splice variant" id="VSP_045483" description="In isoform 3." evidence="12">
    <location>
        <begin position="1"/>
        <end position="140"/>
    </location>
</feature>
<feature type="splice variant" id="VSP_046102" description="In isoform 4." evidence="12">
    <original>M</original>
    <variation>MGGKAWPRRAVGTAGGPCAEQISAPFQTLLM</variation>
    <location>
        <position position="1"/>
    </location>
</feature>
<feature type="sequence variant" id="VAR_052651" description="In dbSNP:rs6926224.">
    <original>H</original>
    <variation>Y</variation>
    <location>
        <position position="26"/>
    </location>
</feature>
<feature type="sequence variant" id="VAR_043730" description="In dbSNP:rs6926723.">
    <original>G</original>
    <variation>R</variation>
    <location>
        <position position="64"/>
    </location>
</feature>
<feature type="sequence variant" id="VAR_071850" description="In COXPD20; decreased levels of the protein; decreased valine-tRNA ligase activity; dbSNP:rs587777585." evidence="9">
    <original>T</original>
    <variation>I</variation>
    <location>
        <position position="337"/>
    </location>
</feature>
<feature type="sequence variant" id="VAR_071851" description="In COXPD20; dbSNP:rs587777583." evidence="10">
    <original>A</original>
    <variation>T</variation>
    <location>
        <position position="349"/>
    </location>
</feature>
<feature type="sequence variant" id="VAR_043731" description="In dbSNP:rs2249464." evidence="5 6 7 11">
    <original>W</original>
    <variation>R</variation>
    <location>
        <position position="449"/>
    </location>
</feature>
<feature type="sequence variant" id="VAR_071852" description="In COXPD20; dbSNP:rs587777584." evidence="10">
    <original>A</original>
    <variation>D</variation>
    <location>
        <position position="596"/>
    </location>
</feature>
<feature type="sequence variant" id="VAR_043732" description="In dbSNP:rs2074506." evidence="5 6 7 11">
    <original>V</original>
    <variation>L</variation>
    <location>
        <position position="680"/>
    </location>
</feature>
<feature type="sequence variant" id="VAR_061910" description="In dbSNP:rs55865499.">
    <original>V</original>
    <variation>M</variation>
    <location>
        <position position="765"/>
    </location>
</feature>
<feature type="sequence variant" id="VAR_043733" description="In dbSNP:rs9394021." evidence="5 6 7">
    <original>R</original>
    <variation>Q</variation>
    <location>
        <position position="917"/>
    </location>
</feature>
<feature type="sequence variant" id="VAR_043734" description="In dbSNP:rs2252863." evidence="5 6 7 8 11">
    <original>A</original>
    <variation>T</variation>
    <location>
        <position position="965"/>
    </location>
</feature>
<feature type="sequence variant" id="VAR_043735" description="In dbSNP:rs4678." evidence="4 5 7">
    <original>R</original>
    <variation>Q</variation>
    <location>
        <position position="1049"/>
    </location>
</feature>
<feature type="sequence conflict" description="In Ref. 2; BAG65557." evidence="13" ref="2">
    <original>F</original>
    <variation>S</variation>
    <location>
        <position position="25"/>
    </location>
</feature>
<feature type="sequence conflict" description="In Ref. 2; BAG57195." evidence="13" ref="2">
    <original>H</original>
    <variation>R</variation>
    <location>
        <position position="156"/>
    </location>
</feature>
<feature type="sequence conflict" description="In Ref. 2; BAB15191." evidence="13" ref="2">
    <original>E</original>
    <variation>G</variation>
    <location>
        <position position="985"/>
    </location>
</feature>
<feature type="sequence conflict" description="In Ref. 2; BAG65557." evidence="13" ref="2">
    <original>S</original>
    <variation>G</variation>
    <location>
        <position position="1060"/>
    </location>
</feature>